<geneLocation type="chloroplast"/>
<comment type="function">
    <text evidence="2">GTP hydrolase that promotes the GTP-dependent binding of aminoacyl-tRNA to the A-site of ribosomes during protein biosynthesis.</text>
</comment>
<comment type="catalytic activity">
    <reaction evidence="2">
        <text>GTP + H2O = GDP + phosphate + H(+)</text>
        <dbReference type="Rhea" id="RHEA:19669"/>
        <dbReference type="ChEBI" id="CHEBI:15377"/>
        <dbReference type="ChEBI" id="CHEBI:15378"/>
        <dbReference type="ChEBI" id="CHEBI:37565"/>
        <dbReference type="ChEBI" id="CHEBI:43474"/>
        <dbReference type="ChEBI" id="CHEBI:58189"/>
        <dbReference type="EC" id="3.6.5.3"/>
    </reaction>
    <physiologicalReaction direction="left-to-right" evidence="2">
        <dbReference type="Rhea" id="RHEA:19670"/>
    </physiologicalReaction>
</comment>
<comment type="subcellular location">
    <subcellularLocation>
        <location>Plastid</location>
        <location>Chloroplast</location>
    </subcellularLocation>
</comment>
<comment type="miscellaneous">
    <text>This is a very divergent elongation factor, it is probably no longer completely functional.</text>
</comment>
<comment type="similarity">
    <text evidence="3">Belongs to the TRAFAC class translation factor GTPase superfamily. Classic translation factor GTPase family. EF-Tu/EF-1A subfamily.</text>
</comment>
<keyword id="KW-0150">Chloroplast</keyword>
<keyword id="KW-0251">Elongation factor</keyword>
<keyword id="KW-0342">GTP-binding</keyword>
<keyword id="KW-0378">Hydrolase</keyword>
<keyword id="KW-0460">Magnesium</keyword>
<keyword id="KW-0479">Metal-binding</keyword>
<keyword id="KW-0547">Nucleotide-binding</keyword>
<keyword id="KW-0934">Plastid</keyword>
<keyword id="KW-0648">Protein biosynthesis</keyword>
<feature type="chain" id="PRO_0000091451" description="Elongation factor Tu, chloroplastic">
    <location>
        <begin position="1"/>
        <end position="415"/>
    </location>
</feature>
<feature type="domain" description="tr-type G">
    <location>
        <begin position="13"/>
        <end position="217"/>
    </location>
</feature>
<feature type="region of interest" description="G1" evidence="1">
    <location>
        <begin position="22"/>
        <end position="29"/>
    </location>
</feature>
<feature type="region of interest" description="G2" evidence="1">
    <location>
        <begin position="63"/>
        <end position="67"/>
    </location>
</feature>
<feature type="region of interest" description="G3" evidence="1">
    <location>
        <begin position="84"/>
        <end position="87"/>
    </location>
</feature>
<feature type="region of interest" description="G4" evidence="1">
    <location>
        <begin position="139"/>
        <end position="142"/>
    </location>
</feature>
<feature type="region of interest" description="G5" evidence="1">
    <location>
        <begin position="177"/>
        <end position="179"/>
    </location>
</feature>
<feature type="binding site" evidence="1">
    <location>
        <begin position="22"/>
        <end position="29"/>
    </location>
    <ligand>
        <name>GTP</name>
        <dbReference type="ChEBI" id="CHEBI:37565"/>
    </ligand>
</feature>
<feature type="binding site" evidence="2">
    <location>
        <position position="29"/>
    </location>
    <ligand>
        <name>Mg(2+)</name>
        <dbReference type="ChEBI" id="CHEBI:18420"/>
    </ligand>
</feature>
<feature type="binding site" evidence="1">
    <location>
        <begin position="84"/>
        <end position="88"/>
    </location>
    <ligand>
        <name>GTP</name>
        <dbReference type="ChEBI" id="CHEBI:37565"/>
    </ligand>
</feature>
<feature type="binding site" evidence="1">
    <location>
        <begin position="139"/>
        <end position="142"/>
    </location>
    <ligand>
        <name>GTP</name>
        <dbReference type="ChEBI" id="CHEBI:37565"/>
    </ligand>
</feature>
<reference key="1">
    <citation type="journal article" date="1990" name="Proc. Natl. Acad. Sci. U.S.A.">
        <title>Different fates of the chloroplast tufA gene following its transfer to the nucleus in green algae.</title>
        <authorList>
            <person name="Baldauf S.L."/>
            <person name="Manhart J.R."/>
            <person name="Palmer J.D."/>
        </authorList>
    </citation>
    <scope>NUCLEOTIDE SEQUENCE [GENOMIC DNA]</scope>
</reference>
<accession>P18905</accession>
<organism>
    <name type="scientific">Coleochaete orbicularis</name>
    <name type="common">Charophycean green alga</name>
    <dbReference type="NCBI Taxonomy" id="3124"/>
    <lineage>
        <taxon>Eukaryota</taxon>
        <taxon>Viridiplantae</taxon>
        <taxon>Streptophyta</taxon>
        <taxon>Coleochaetophyceae</taxon>
        <taxon>Coleochaetales</taxon>
        <taxon>Coleochaetaceae</taxon>
        <taxon>Coleochaete</taxon>
    </lineage>
</organism>
<protein>
    <recommendedName>
        <fullName>Elongation factor Tu, chloroplastic</fullName>
        <shortName>EF-Tu</shortName>
        <ecNumber evidence="2">3.6.5.3</ecNumber>
    </recommendedName>
</protein>
<gene>
    <name type="primary">tufA</name>
</gene>
<sequence>MERLLHMTFRNKKIHLNVGTIGHFSHGKTTLTAAITAVLAGIGYTQPKQNDAIDSTSEEKARNMSIYVHHVEYETAARHYSHLDCPGHVNYINNMITGVSQMDGAILVVSAVDGPMAQTKEHILLAKLLGISSILVFINKEDELDDQEVLPMLIQNMRQILIYYGFPGHTSPILCGSALLALEAMNENPNFNRGKNKWVDKISSLIDHLDLYLPTPRRKLNKPFLMPIERVILIPSFGLVGTGTIEKGHINIGESVEIVGFKDTQHSKVISLKMFNKTLEQAIAGDDIGIFLEGTNKNNFQKGMVIAKPNTIQSWNHFEAQIYILRREEGGRRSPFFQGYCPQFYFRTIQITGRMESFEYEIGGKTWMVMPGEKIKAIIQLIFPIALKKKMRFVIREGGFTIGVGIILELIKIKN</sequence>
<dbReference type="EC" id="3.6.5.3" evidence="2"/>
<dbReference type="EMBL" id="M34286">
    <property type="protein sequence ID" value="AAA84135.1"/>
    <property type="molecule type" value="Genomic_DNA"/>
</dbReference>
<dbReference type="PIR" id="A35773">
    <property type="entry name" value="A35773"/>
</dbReference>
<dbReference type="SMR" id="P18905"/>
<dbReference type="GO" id="GO:0009507">
    <property type="term" value="C:chloroplast"/>
    <property type="evidence" value="ECO:0007669"/>
    <property type="project" value="UniProtKB-SubCell"/>
</dbReference>
<dbReference type="GO" id="GO:0005739">
    <property type="term" value="C:mitochondrion"/>
    <property type="evidence" value="ECO:0007669"/>
    <property type="project" value="TreeGrafter"/>
</dbReference>
<dbReference type="GO" id="GO:0005525">
    <property type="term" value="F:GTP binding"/>
    <property type="evidence" value="ECO:0007669"/>
    <property type="project" value="UniProtKB-UniRule"/>
</dbReference>
<dbReference type="GO" id="GO:0003924">
    <property type="term" value="F:GTPase activity"/>
    <property type="evidence" value="ECO:0007669"/>
    <property type="project" value="InterPro"/>
</dbReference>
<dbReference type="GO" id="GO:0003746">
    <property type="term" value="F:translation elongation factor activity"/>
    <property type="evidence" value="ECO:0007669"/>
    <property type="project" value="UniProtKB-UniRule"/>
</dbReference>
<dbReference type="GO" id="GO:0070125">
    <property type="term" value="P:mitochondrial translational elongation"/>
    <property type="evidence" value="ECO:0007669"/>
    <property type="project" value="TreeGrafter"/>
</dbReference>
<dbReference type="CDD" id="cd01884">
    <property type="entry name" value="EF_Tu"/>
    <property type="match status" value="1"/>
</dbReference>
<dbReference type="CDD" id="cd03697">
    <property type="entry name" value="EFTU_II"/>
    <property type="match status" value="1"/>
</dbReference>
<dbReference type="CDD" id="cd03707">
    <property type="entry name" value="EFTU_III"/>
    <property type="match status" value="1"/>
</dbReference>
<dbReference type="FunFam" id="2.40.30.10:FF:000001">
    <property type="entry name" value="Elongation factor Tu"/>
    <property type="match status" value="1"/>
</dbReference>
<dbReference type="Gene3D" id="3.40.50.300">
    <property type="entry name" value="P-loop containing nucleotide triphosphate hydrolases"/>
    <property type="match status" value="1"/>
</dbReference>
<dbReference type="Gene3D" id="2.40.30.10">
    <property type="entry name" value="Translation factors"/>
    <property type="match status" value="2"/>
</dbReference>
<dbReference type="HAMAP" id="MF_00118_B">
    <property type="entry name" value="EF_Tu_B"/>
    <property type="match status" value="1"/>
</dbReference>
<dbReference type="InterPro" id="IPR041709">
    <property type="entry name" value="EF-Tu_GTP-bd"/>
</dbReference>
<dbReference type="InterPro" id="IPR050055">
    <property type="entry name" value="EF-Tu_GTPase"/>
</dbReference>
<dbReference type="InterPro" id="IPR004161">
    <property type="entry name" value="EFTu-like_2"/>
</dbReference>
<dbReference type="InterPro" id="IPR033720">
    <property type="entry name" value="EFTU_2"/>
</dbReference>
<dbReference type="InterPro" id="IPR027417">
    <property type="entry name" value="P-loop_NTPase"/>
</dbReference>
<dbReference type="InterPro" id="IPR000795">
    <property type="entry name" value="T_Tr_GTP-bd_dom"/>
</dbReference>
<dbReference type="InterPro" id="IPR009000">
    <property type="entry name" value="Transl_B-barrel_sf"/>
</dbReference>
<dbReference type="InterPro" id="IPR009001">
    <property type="entry name" value="Transl_elong_EF1A/Init_IF2_C"/>
</dbReference>
<dbReference type="InterPro" id="IPR004541">
    <property type="entry name" value="Transl_elong_EFTu/EF1A_bac/org"/>
</dbReference>
<dbReference type="InterPro" id="IPR004160">
    <property type="entry name" value="Transl_elong_EFTu/EF1A_C"/>
</dbReference>
<dbReference type="NCBIfam" id="NF000766">
    <property type="entry name" value="PRK00049.1"/>
    <property type="match status" value="1"/>
</dbReference>
<dbReference type="NCBIfam" id="NF009372">
    <property type="entry name" value="PRK12735.1"/>
    <property type="match status" value="1"/>
</dbReference>
<dbReference type="NCBIfam" id="NF009373">
    <property type="entry name" value="PRK12736.1"/>
    <property type="match status" value="1"/>
</dbReference>
<dbReference type="PANTHER" id="PTHR43721:SF5">
    <property type="entry name" value="ELONGATION FACTOR TU, CHLOROPLASTIC"/>
    <property type="match status" value="1"/>
</dbReference>
<dbReference type="PANTHER" id="PTHR43721">
    <property type="entry name" value="ELONGATION FACTOR TU-RELATED"/>
    <property type="match status" value="1"/>
</dbReference>
<dbReference type="Pfam" id="PF00009">
    <property type="entry name" value="GTP_EFTU"/>
    <property type="match status" value="1"/>
</dbReference>
<dbReference type="Pfam" id="PF03144">
    <property type="entry name" value="GTP_EFTU_D2"/>
    <property type="match status" value="1"/>
</dbReference>
<dbReference type="Pfam" id="PF03143">
    <property type="entry name" value="GTP_EFTU_D3"/>
    <property type="match status" value="1"/>
</dbReference>
<dbReference type="PRINTS" id="PR00315">
    <property type="entry name" value="ELONGATNFCT"/>
</dbReference>
<dbReference type="SUPFAM" id="SSF50465">
    <property type="entry name" value="EF-Tu/eEF-1alpha/eIF2-gamma C-terminal domain"/>
    <property type="match status" value="1"/>
</dbReference>
<dbReference type="SUPFAM" id="SSF52540">
    <property type="entry name" value="P-loop containing nucleoside triphosphate hydrolases"/>
    <property type="match status" value="1"/>
</dbReference>
<dbReference type="SUPFAM" id="SSF50447">
    <property type="entry name" value="Translation proteins"/>
    <property type="match status" value="1"/>
</dbReference>
<dbReference type="PROSITE" id="PS51722">
    <property type="entry name" value="G_TR_2"/>
    <property type="match status" value="1"/>
</dbReference>
<proteinExistence type="inferred from homology"/>
<evidence type="ECO:0000250" key="1"/>
<evidence type="ECO:0000255" key="2">
    <source>
        <dbReference type="HAMAP-Rule" id="MF_00118"/>
    </source>
</evidence>
<evidence type="ECO:0000305" key="3"/>
<name>EFTU_COLOB</name>